<protein>
    <recommendedName>
        <fullName evidence="1">Indole-3-glycerol phosphate synthase</fullName>
        <shortName evidence="1">IGPS</shortName>
        <ecNumber evidence="1">4.1.1.48</ecNumber>
    </recommendedName>
</protein>
<feature type="chain" id="PRO_1000198781" description="Indole-3-glycerol phosphate synthase">
    <location>
        <begin position="1"/>
        <end position="258"/>
    </location>
</feature>
<comment type="catalytic activity">
    <reaction evidence="1">
        <text>1-(2-carboxyphenylamino)-1-deoxy-D-ribulose 5-phosphate + H(+) = (1S,2R)-1-C-(indol-3-yl)glycerol 3-phosphate + CO2 + H2O</text>
        <dbReference type="Rhea" id="RHEA:23476"/>
        <dbReference type="ChEBI" id="CHEBI:15377"/>
        <dbReference type="ChEBI" id="CHEBI:15378"/>
        <dbReference type="ChEBI" id="CHEBI:16526"/>
        <dbReference type="ChEBI" id="CHEBI:58613"/>
        <dbReference type="ChEBI" id="CHEBI:58866"/>
        <dbReference type="EC" id="4.1.1.48"/>
    </reaction>
</comment>
<comment type="pathway">
    <text evidence="1">Amino-acid biosynthesis; L-tryptophan biosynthesis; L-tryptophan from chorismate: step 4/5.</text>
</comment>
<comment type="similarity">
    <text evidence="1">Belongs to the TrpC family.</text>
</comment>
<keyword id="KW-0028">Amino-acid biosynthesis</keyword>
<keyword id="KW-0057">Aromatic amino acid biosynthesis</keyword>
<keyword id="KW-0210">Decarboxylase</keyword>
<keyword id="KW-0456">Lyase</keyword>
<keyword id="KW-0822">Tryptophan biosynthesis</keyword>
<gene>
    <name evidence="1" type="primary">trpC</name>
    <name type="ordered locus">NAMH_1219</name>
</gene>
<name>TRPC_NAUPA</name>
<evidence type="ECO:0000255" key="1">
    <source>
        <dbReference type="HAMAP-Rule" id="MF_00134"/>
    </source>
</evidence>
<sequence length="258" mass="29366">MILDKIIAQTKKDLDNRKNSNDFNKFLAQKRDFRDVKKALKATPDNPYRIIAEVKKASPSKGIIKEDFNPVEIAKEYIEVADAMSILTEPHFFQGSLEYLKEINKFSPIPLLRKDFIIDEFQIAEAYAAGADFILLIAKALDVSTLKRLYDFAKNTGLEVLFEIHDEEDLQKGLEVGADIIGFNHRNLETFEMDMDLSKKLIPKLPKNVIVVAESGINDFETVKKLSRNGVDAYLVGEHFMRQDNIKKAVLTLKGKTE</sequence>
<proteinExistence type="inferred from homology"/>
<dbReference type="EC" id="4.1.1.48" evidence="1"/>
<dbReference type="EMBL" id="CP001279">
    <property type="protein sequence ID" value="ACM92217.1"/>
    <property type="molecule type" value="Genomic_DNA"/>
</dbReference>
<dbReference type="RefSeq" id="WP_012663589.1">
    <property type="nucleotide sequence ID" value="NC_012115.1"/>
</dbReference>
<dbReference type="SMR" id="B9LAF4"/>
<dbReference type="STRING" id="598659.NAMH_1219"/>
<dbReference type="KEGG" id="nam:NAMH_1219"/>
<dbReference type="eggNOG" id="COG0134">
    <property type="taxonomic scope" value="Bacteria"/>
</dbReference>
<dbReference type="HOGENOM" id="CLU_034247_2_0_7"/>
<dbReference type="OrthoDB" id="9804217at2"/>
<dbReference type="UniPathway" id="UPA00035">
    <property type="reaction ID" value="UER00043"/>
</dbReference>
<dbReference type="Proteomes" id="UP000000448">
    <property type="component" value="Chromosome"/>
</dbReference>
<dbReference type="GO" id="GO:0004425">
    <property type="term" value="F:indole-3-glycerol-phosphate synthase activity"/>
    <property type="evidence" value="ECO:0007669"/>
    <property type="project" value="UniProtKB-UniRule"/>
</dbReference>
<dbReference type="GO" id="GO:0004640">
    <property type="term" value="F:phosphoribosylanthranilate isomerase activity"/>
    <property type="evidence" value="ECO:0007669"/>
    <property type="project" value="TreeGrafter"/>
</dbReference>
<dbReference type="GO" id="GO:0000162">
    <property type="term" value="P:L-tryptophan biosynthetic process"/>
    <property type="evidence" value="ECO:0007669"/>
    <property type="project" value="UniProtKB-UniRule"/>
</dbReference>
<dbReference type="CDD" id="cd00331">
    <property type="entry name" value="IGPS"/>
    <property type="match status" value="1"/>
</dbReference>
<dbReference type="FunFam" id="3.20.20.70:FF:000024">
    <property type="entry name" value="Indole-3-glycerol phosphate synthase"/>
    <property type="match status" value="1"/>
</dbReference>
<dbReference type="Gene3D" id="3.20.20.70">
    <property type="entry name" value="Aldolase class I"/>
    <property type="match status" value="1"/>
</dbReference>
<dbReference type="HAMAP" id="MF_00134_B">
    <property type="entry name" value="IGPS_B"/>
    <property type="match status" value="1"/>
</dbReference>
<dbReference type="InterPro" id="IPR013785">
    <property type="entry name" value="Aldolase_TIM"/>
</dbReference>
<dbReference type="InterPro" id="IPR045186">
    <property type="entry name" value="Indole-3-glycerol_P_synth"/>
</dbReference>
<dbReference type="InterPro" id="IPR013798">
    <property type="entry name" value="Indole-3-glycerol_P_synth_dom"/>
</dbReference>
<dbReference type="InterPro" id="IPR001468">
    <property type="entry name" value="Indole-3-GlycerolPSynthase_CS"/>
</dbReference>
<dbReference type="InterPro" id="IPR011060">
    <property type="entry name" value="RibuloseP-bd_barrel"/>
</dbReference>
<dbReference type="NCBIfam" id="NF001377">
    <property type="entry name" value="PRK00278.2-4"/>
    <property type="match status" value="1"/>
</dbReference>
<dbReference type="NCBIfam" id="NF001378">
    <property type="entry name" value="PRK00278.2-5"/>
    <property type="match status" value="1"/>
</dbReference>
<dbReference type="PANTHER" id="PTHR22854:SF2">
    <property type="entry name" value="INDOLE-3-GLYCEROL-PHOSPHATE SYNTHASE"/>
    <property type="match status" value="1"/>
</dbReference>
<dbReference type="PANTHER" id="PTHR22854">
    <property type="entry name" value="TRYPTOPHAN BIOSYNTHESIS PROTEIN"/>
    <property type="match status" value="1"/>
</dbReference>
<dbReference type="Pfam" id="PF00218">
    <property type="entry name" value="IGPS"/>
    <property type="match status" value="1"/>
</dbReference>
<dbReference type="SUPFAM" id="SSF51366">
    <property type="entry name" value="Ribulose-phoshate binding barrel"/>
    <property type="match status" value="1"/>
</dbReference>
<dbReference type="PROSITE" id="PS00614">
    <property type="entry name" value="IGPS"/>
    <property type="match status" value="1"/>
</dbReference>
<reference key="1">
    <citation type="journal article" date="2009" name="PLoS Genet.">
        <title>Adaptations to submarine hydrothermal environments exemplified by the genome of Nautilia profundicola.</title>
        <authorList>
            <person name="Campbell B.J."/>
            <person name="Smith J.L."/>
            <person name="Hanson T.E."/>
            <person name="Klotz M.G."/>
            <person name="Stein L.Y."/>
            <person name="Lee C.K."/>
            <person name="Wu D."/>
            <person name="Robinson J.M."/>
            <person name="Khouri H.M."/>
            <person name="Eisen J.A."/>
            <person name="Cary S.C."/>
        </authorList>
    </citation>
    <scope>NUCLEOTIDE SEQUENCE [LARGE SCALE GENOMIC DNA]</scope>
    <source>
        <strain>ATCC BAA-1463 / DSM 18972 / AmH</strain>
    </source>
</reference>
<organism>
    <name type="scientific">Nautilia profundicola (strain ATCC BAA-1463 / DSM 18972 / AmH)</name>
    <dbReference type="NCBI Taxonomy" id="598659"/>
    <lineage>
        <taxon>Bacteria</taxon>
        <taxon>Pseudomonadati</taxon>
        <taxon>Campylobacterota</taxon>
        <taxon>Epsilonproteobacteria</taxon>
        <taxon>Nautiliales</taxon>
        <taxon>Nautiliaceae</taxon>
        <taxon>Nautilia</taxon>
    </lineage>
</organism>
<accession>B9LAF4</accession>